<organism>
    <name type="scientific">Pygmy chimpanzee papillomavirus type 1C</name>
    <name type="common">PCPV-1C</name>
    <dbReference type="NCBI Taxonomy" id="521527"/>
    <lineage>
        <taxon>Viruses</taxon>
        <taxon>Monodnaviria</taxon>
        <taxon>Shotokuvirae</taxon>
        <taxon>Cossaviricota</taxon>
        <taxon>Papovaviricetes</taxon>
        <taxon>Zurhausenvirales</taxon>
        <taxon>Papillomaviridae</taxon>
        <taxon>Firstpapillomavirinae</taxon>
        <taxon>Alphapapillomavirus</taxon>
        <taxon>Alphapapillomavirus 10</taxon>
    </lineage>
</organism>
<organismHost>
    <name type="scientific">Pan paniscus</name>
    <name type="common">Pygmy chimpanzee</name>
    <name type="synonym">Bonobo</name>
    <dbReference type="NCBI Taxonomy" id="9597"/>
</organismHost>
<protein>
    <recommendedName>
        <fullName evidence="1">Replication protein E1</fullName>
        <ecNumber evidence="1">5.6.2.4</ecNumber>
    </recommendedName>
    <alternativeName>
        <fullName evidence="1">ATP-dependent helicase E1</fullName>
    </alternativeName>
    <alternativeName>
        <fullName evidence="1">DNA 3'-5' helicase E1</fullName>
    </alternativeName>
</protein>
<comment type="function">
    <text evidence="1">ATP-dependent DNA 3'-5' helicase required for initiation of viral DNA replication. It forms a complex with the viral E2 protein. The E1-E2 complex binds to the replication origin which contains binding sites for both proteins. During the initial step, a dimer of E1 interacts with a dimer of protein E2 leading to a complex that binds the viral origin of replication with high specificity. Then, a second dimer of E1 displaces the E2 dimer in an ATP-dependent manner to form the E1 tetramer. Following this, two E1 monomers are added to each half of the site, which results in the formation of two E1 trimers on the viral ori. Subsequently, two hexamers will be created. The double hexamer acts as a bi-directional helicase machinery and unwinds the viral DNA and then recruits the host DNA polymerase to start replication.</text>
</comment>
<comment type="catalytic activity">
    <reaction evidence="1">
        <text>Couples ATP hydrolysis with the unwinding of duplex DNA by translocating in the 3'-5' direction.</text>
        <dbReference type="EC" id="5.6.2.4"/>
    </reaction>
</comment>
<comment type="catalytic activity">
    <reaction evidence="1">
        <text>ATP + H2O = ADP + phosphate + H(+)</text>
        <dbReference type="Rhea" id="RHEA:13065"/>
        <dbReference type="ChEBI" id="CHEBI:15377"/>
        <dbReference type="ChEBI" id="CHEBI:15378"/>
        <dbReference type="ChEBI" id="CHEBI:30616"/>
        <dbReference type="ChEBI" id="CHEBI:43474"/>
        <dbReference type="ChEBI" id="CHEBI:456216"/>
        <dbReference type="EC" id="5.6.2.4"/>
    </reaction>
</comment>
<comment type="subunit">
    <text evidence="1">Can form hexamers. Interacts with E2 protein; this interaction increases E1 DNA binding specificity. Interacts with host DNA polymerase subunit POLA2. Interacts with host single stranded DNA-binding protein RPA1. Interacts with host TOP1; this interaction stimulates the enzymatic activity of TOP1.</text>
</comment>
<comment type="subcellular location">
    <subcellularLocation>
        <location evidence="1">Host nucleus</location>
    </subcellularLocation>
</comment>
<comment type="PTM">
    <text evidence="1">Phosphorylated.</text>
</comment>
<comment type="PTM">
    <text evidence="1">Sumoylated.</text>
</comment>
<comment type="similarity">
    <text evidence="1">Belongs to the papillomaviridae E1 protein family.</text>
</comment>
<gene>
    <name evidence="1" type="primary">E1</name>
</gene>
<proteinExistence type="inferred from homology"/>
<feature type="chain" id="PRO_0000133163" description="Replication protein E1">
    <location>
        <begin position="1"/>
        <end position="648"/>
    </location>
</feature>
<feature type="domain" description="SF3 helicase" evidence="1">
    <location>
        <begin position="451"/>
        <end position="601"/>
    </location>
</feature>
<feature type="region of interest" description="Disordered" evidence="2">
    <location>
        <begin position="151"/>
        <end position="186"/>
    </location>
</feature>
<feature type="region of interest" description="DNA-binding region" evidence="1">
    <location>
        <begin position="184"/>
        <end position="352"/>
    </location>
</feature>
<feature type="short sequence motif" description="Nuclear localization signal" evidence="1">
    <location>
        <begin position="83"/>
        <end position="85"/>
    </location>
</feature>
<feature type="short sequence motif" description="Nuclear export signal" evidence="1">
    <location>
        <begin position="106"/>
        <end position="115"/>
    </location>
</feature>
<feature type="compositionally biased region" description="Basic and acidic residues" evidence="2">
    <location>
        <begin position="163"/>
        <end position="185"/>
    </location>
</feature>
<feature type="binding site" evidence="1">
    <location>
        <begin position="477"/>
        <end position="484"/>
    </location>
    <ligand>
        <name>ATP</name>
        <dbReference type="ChEBI" id="CHEBI:30616"/>
    </ligand>
</feature>
<feature type="modified residue" description="Phosphoserine; by host" evidence="1">
    <location>
        <position position="89"/>
    </location>
</feature>
<feature type="modified residue" description="Phosphoserine; by host" evidence="1">
    <location>
        <position position="93"/>
    </location>
</feature>
<feature type="modified residue" description="Phosphoserine; by host" evidence="1">
    <location>
        <position position="107"/>
    </location>
</feature>
<feature type="cross-link" description="Glycyl lysine isopeptide (Lys-Gly) (interchain with G-Cter in SUMO)" evidence="1">
    <location>
        <position position="558"/>
    </location>
</feature>
<name>VE1_PCPVC</name>
<sequence>MADDTGTDNEGTGCSGWFLVEAIVDKTTGEQVSDDEDETVEDSGLDMVDFIDDRPITHNSLEAQALLNEQEADAHYAAVQDLKRKYLGSPYVSPLGHIEQSVDCDISPRLDAIQLSRKPKKVKRRLFQSREITDSGYGYSEVETATQVERYGEPENGCGGGGDGREKEGEGQVHTEVHTESEIEQHTGTTRVLELLKCKDVRATLHGKFKECYGLSFKDLTREFKSDKTTCGDWVVAGFGVHHSVSEAFQKLIQPLSTYSHIQWLTNYKCMGMVLLVLLRFKVNKNRCTVARTLATLLNIPEDHMLIEPPKIQSSVAALYWFRTSISNASIVTGDTPEWIARQTIVEHGLADNQFKLTEMVQWAYDNDYCDESDIAFEYAQRADFDSNAKAFLNSNCQAKYVKDCATMCKHYKNAEMKKMSIKQWIKYRSNKIDETGNWKPIVQFLRHQGIEFISFLSKLKLWLHGTPKKNCIAIVGPPDTGKSAFCMSLIKFLGGTVISYVNSSSHFWLQPLCNAKVALLDDATQSCWGYMDTYMRNLLDGNPMSIDRKHKSLALIKCPPLLVTSNIDITTEERYKYLYSRVTLFKFPNPFPFDSNGNAVYELCDANWKCFFARLSASLDIQDSEDEDDGDTSQAFRCVPGTVVRTV</sequence>
<evidence type="ECO:0000255" key="1">
    <source>
        <dbReference type="HAMAP-Rule" id="MF_04000"/>
    </source>
</evidence>
<evidence type="ECO:0000256" key="2">
    <source>
        <dbReference type="SAM" id="MobiDB-lite"/>
    </source>
</evidence>
<reference key="1">
    <citation type="submission" date="1997-10" db="EMBL/GenBank/DDBJ databases">
        <authorList>
            <person name="Scinicariello F."/>
            <person name="Soza I."/>
            <person name="Brasky K.M."/>
            <person name="Hilliard J.K."/>
        </authorList>
    </citation>
    <scope>NUCLEOTIDE SEQUENCE [GENOMIC DNA]</scope>
</reference>
<accession>P81174</accession>
<keyword id="KW-0067">ATP-binding</keyword>
<keyword id="KW-0235">DNA replication</keyword>
<keyword id="KW-0238">DNA-binding</keyword>
<keyword id="KW-0244">Early protein</keyword>
<keyword id="KW-0347">Helicase</keyword>
<keyword id="KW-1048">Host nucleus</keyword>
<keyword id="KW-0378">Hydrolase</keyword>
<keyword id="KW-0413">Isomerase</keyword>
<keyword id="KW-1017">Isopeptide bond</keyword>
<keyword id="KW-0547">Nucleotide-binding</keyword>
<keyword id="KW-0597">Phosphoprotein</keyword>
<keyword id="KW-1185">Reference proteome</keyword>
<keyword id="KW-0832">Ubl conjugation</keyword>
<dbReference type="EC" id="5.6.2.4" evidence="1"/>
<dbReference type="EMBL" id="AF020905">
    <property type="protein sequence ID" value="AAB71706.1"/>
    <property type="molecule type" value="Genomic_DNA"/>
</dbReference>
<dbReference type="SMR" id="P81174"/>
<dbReference type="Proteomes" id="UP000118373">
    <property type="component" value="Segment"/>
</dbReference>
<dbReference type="GO" id="GO:0042025">
    <property type="term" value="C:host cell nucleus"/>
    <property type="evidence" value="ECO:0007669"/>
    <property type="project" value="UniProtKB-SubCell"/>
</dbReference>
<dbReference type="GO" id="GO:0005524">
    <property type="term" value="F:ATP binding"/>
    <property type="evidence" value="ECO:0007669"/>
    <property type="project" value="UniProtKB-UniRule"/>
</dbReference>
<dbReference type="GO" id="GO:0016887">
    <property type="term" value="F:ATP hydrolysis activity"/>
    <property type="evidence" value="ECO:0007669"/>
    <property type="project" value="RHEA"/>
</dbReference>
<dbReference type="GO" id="GO:0003677">
    <property type="term" value="F:DNA binding"/>
    <property type="evidence" value="ECO:0007669"/>
    <property type="project" value="UniProtKB-UniRule"/>
</dbReference>
<dbReference type="GO" id="GO:0003678">
    <property type="term" value="F:DNA helicase activity"/>
    <property type="evidence" value="ECO:0007669"/>
    <property type="project" value="UniProtKB-UniRule"/>
</dbReference>
<dbReference type="GO" id="GO:0006260">
    <property type="term" value="P:DNA replication"/>
    <property type="evidence" value="ECO:0007669"/>
    <property type="project" value="UniProtKB-UniRule"/>
</dbReference>
<dbReference type="FunFam" id="1.10.10.510:FF:000001">
    <property type="entry name" value="Replication protein E1"/>
    <property type="match status" value="1"/>
</dbReference>
<dbReference type="Gene3D" id="3.40.1310.10">
    <property type="match status" value="1"/>
</dbReference>
<dbReference type="Gene3D" id="3.40.50.300">
    <property type="entry name" value="P-loop containing nucleotide triphosphate hydrolases"/>
    <property type="match status" value="1"/>
</dbReference>
<dbReference type="Gene3D" id="1.10.10.510">
    <property type="entry name" value="Zinc finger, large T-antigen D1 domain"/>
    <property type="match status" value="1"/>
</dbReference>
<dbReference type="HAMAP" id="MF_04000">
    <property type="entry name" value="PPV_E1"/>
    <property type="match status" value="1"/>
</dbReference>
<dbReference type="InterPro" id="IPR014015">
    <property type="entry name" value="Helicase_SF3_DNA-vir"/>
</dbReference>
<dbReference type="InterPro" id="IPR027417">
    <property type="entry name" value="P-loop_NTPase"/>
</dbReference>
<dbReference type="InterPro" id="IPR001177">
    <property type="entry name" value="PPV_DNA_helicase_E1_C"/>
</dbReference>
<dbReference type="InterPro" id="IPR014000">
    <property type="entry name" value="PPV_DNA_helicase_E1_N"/>
</dbReference>
<dbReference type="InterPro" id="IPR046832">
    <property type="entry name" value="PPV_E1_DBD"/>
</dbReference>
<dbReference type="InterPro" id="IPR046935">
    <property type="entry name" value="PPV_E1_DBD_sf"/>
</dbReference>
<dbReference type="InterPro" id="IPR016393">
    <property type="entry name" value="Rep_E1_papillomaV"/>
</dbReference>
<dbReference type="InterPro" id="IPR037102">
    <property type="entry name" value="Znf_lg_T-Ag_D1_dom_sf"/>
</dbReference>
<dbReference type="Pfam" id="PF00519">
    <property type="entry name" value="PPV_E1_C"/>
    <property type="match status" value="1"/>
</dbReference>
<dbReference type="Pfam" id="PF20450">
    <property type="entry name" value="PPV_E1_DBD"/>
    <property type="match status" value="1"/>
</dbReference>
<dbReference type="Pfam" id="PF00524">
    <property type="entry name" value="PPV_E1_N"/>
    <property type="match status" value="1"/>
</dbReference>
<dbReference type="PIRSF" id="PIRSF003383">
    <property type="entry name" value="Rep_E1_papillomaV"/>
    <property type="match status" value="1"/>
</dbReference>
<dbReference type="SUPFAM" id="SSF55464">
    <property type="entry name" value="Origin of replication-binding domain, RBD-like"/>
    <property type="match status" value="1"/>
</dbReference>
<dbReference type="SUPFAM" id="SSF52540">
    <property type="entry name" value="P-loop containing nucleoside triphosphate hydrolases"/>
    <property type="match status" value="1"/>
</dbReference>
<dbReference type="PROSITE" id="PS51206">
    <property type="entry name" value="SF3_HELICASE_1"/>
    <property type="match status" value="1"/>
</dbReference>